<protein>
    <recommendedName>
        <fullName evidence="2">Baseplate protein X</fullName>
    </recommendedName>
    <alternativeName>
        <fullName evidence="2">Gene X protein</fullName>
        <shortName>GpX</shortName>
    </alternativeName>
</protein>
<gene>
    <name type="primary">X</name>
</gene>
<comment type="function">
    <text evidence="1">Might be involved in the peptidoglycan digestion during virus entry into the host cell.</text>
</comment>
<comment type="subcellular location">
    <subcellularLocation>
        <location evidence="2">Virion</location>
    </subcellularLocation>
    <text evidence="1">Localizes to the baseplate at the junction of the tail tube.</text>
</comment>
<comment type="induction">
    <text evidence="2">Expressed in the late phase of the viral replicative cycle.</text>
</comment>
<name>BPX_BPP2</name>
<proteinExistence type="evidence at protein level"/>
<sequence length="67" mass="7083">MKTFALQGDTLDAICVRYYGRTEGVVETVLAANPGLAELGAVLPHGTAVELPDVQTAPVAETVNLWE</sequence>
<evidence type="ECO:0000269" key="1">
    <source>
    </source>
</evidence>
<evidence type="ECO:0000305" key="2"/>
<evidence type="ECO:0007744" key="3">
    <source>
        <dbReference type="PDB" id="2LTF"/>
    </source>
</evidence>
<evidence type="ECO:0007829" key="4">
    <source>
        <dbReference type="PDB" id="2LTF"/>
    </source>
</evidence>
<keyword id="KW-0002">3D-structure</keyword>
<keyword id="KW-0426">Late protein</keyword>
<keyword id="KW-1185">Reference proteome</keyword>
<keyword id="KW-1226">Viral baseplate protein</keyword>
<keyword id="KW-1227">Viral tail protein</keyword>
<keyword id="KW-0946">Virion</keyword>
<organism>
    <name type="scientific">Escherichia phage P2</name>
    <name type="common">Bacteriophage P2</name>
    <dbReference type="NCBI Taxonomy" id="2905681"/>
    <lineage>
        <taxon>Viruses</taxon>
        <taxon>Duplodnaviria</taxon>
        <taxon>Heunggongvirae</taxon>
        <taxon>Uroviricota</taxon>
        <taxon>Caudoviricetes</taxon>
        <taxon>Peduoviridae</taxon>
        <taxon>Peduovirus</taxon>
        <taxon>Peduovirus P2</taxon>
    </lineage>
</organism>
<organismHost>
    <name type="scientific">Enterobacteriaceae</name>
    <dbReference type="NCBI Taxonomy" id="543"/>
</organismHost>
<reference key="1">
    <citation type="journal article" date="1994" name="J. Bacteriol.">
        <title>Functions involved in bacteriophage P2-induced host cell lysis and identification of a new tail gene.</title>
        <authorList>
            <person name="Ziermann R."/>
            <person name="Bartlett B."/>
            <person name="Calendar R."/>
            <person name="Christie G.E."/>
        </authorList>
    </citation>
    <scope>NUCLEOTIDE SEQUENCE [GENOMIC DNA]</scope>
</reference>
<reference evidence="3" key="2">
    <citation type="journal article" date="2013" name="J. Bacteriol.">
        <title>Structural and functional studies of gpX of Escherichia coli phage P2 reveal a widespread role for LysM domains in the baseplates of contractile-tailed phages.</title>
        <authorList>
            <person name="Maxwell K.L."/>
            <person name="Fatehi Hassanabad M."/>
            <person name="Chang T."/>
            <person name="Pirani N."/>
            <person name="Bona D."/>
            <person name="Edwards A.M."/>
            <person name="Davidson A.R."/>
        </authorList>
    </citation>
    <scope>STRUCTURE BY NMR</scope>
    <scope>FUNCTION</scope>
    <scope>SUBCELLULAR LOCATION</scope>
</reference>
<accession>P51772</accession>
<dbReference type="EMBL" id="AF063097">
    <property type="protein sequence ID" value="AAD03274.1"/>
    <property type="molecule type" value="Genomic_DNA"/>
</dbReference>
<dbReference type="PIR" id="B55855">
    <property type="entry name" value="B55855"/>
</dbReference>
<dbReference type="RefSeq" id="NP_046763.1">
    <property type="nucleotide sequence ID" value="NC_001895.1"/>
</dbReference>
<dbReference type="PDB" id="2LTF">
    <property type="method" value="NMR"/>
    <property type="chains" value="A=1-67"/>
</dbReference>
<dbReference type="PDBsum" id="2LTF"/>
<dbReference type="BMRB" id="P51772"/>
<dbReference type="SMR" id="P51772"/>
<dbReference type="GeneID" id="77440794"/>
<dbReference type="KEGG" id="vg:77440794"/>
<dbReference type="EvolutionaryTrace" id="P51772"/>
<dbReference type="Proteomes" id="UP000009092">
    <property type="component" value="Genome"/>
</dbReference>
<dbReference type="GO" id="GO:0098025">
    <property type="term" value="C:virus tail, baseplate"/>
    <property type="evidence" value="ECO:0000314"/>
    <property type="project" value="CACAO"/>
</dbReference>
<dbReference type="InterPro" id="IPR008861">
    <property type="entry name" value="GpX-like"/>
</dbReference>
<dbReference type="Pfam" id="PF05489">
    <property type="entry name" value="Phage_tail_X"/>
    <property type="match status" value="1"/>
</dbReference>
<feature type="chain" id="PRO_0000165265" description="Baseplate protein X">
    <location>
        <begin position="1"/>
        <end position="67"/>
    </location>
</feature>
<feature type="strand" evidence="4">
    <location>
        <begin position="2"/>
        <end position="5"/>
    </location>
</feature>
<feature type="helix" evidence="4">
    <location>
        <begin position="11"/>
        <end position="17"/>
    </location>
</feature>
<feature type="turn" evidence="4">
    <location>
        <begin position="23"/>
        <end position="25"/>
    </location>
</feature>
<feature type="helix" evidence="4">
    <location>
        <begin position="26"/>
        <end position="32"/>
    </location>
</feature>
<feature type="turn" evidence="4">
    <location>
        <begin position="34"/>
        <end position="39"/>
    </location>
</feature>
<feature type="strand" evidence="4">
    <location>
        <begin position="47"/>
        <end position="50"/>
    </location>
</feature>